<proteinExistence type="inferred from homology"/>
<name>LPXA_PSE14</name>
<gene>
    <name evidence="1" type="primary">lpxA</name>
    <name type="ordered locus">PSPPH_3828</name>
</gene>
<organism>
    <name type="scientific">Pseudomonas savastanoi pv. phaseolicola (strain 1448A / Race 6)</name>
    <name type="common">Pseudomonas syringae pv. phaseolicola (strain 1448A / Race 6)</name>
    <dbReference type="NCBI Taxonomy" id="264730"/>
    <lineage>
        <taxon>Bacteria</taxon>
        <taxon>Pseudomonadati</taxon>
        <taxon>Pseudomonadota</taxon>
        <taxon>Gammaproteobacteria</taxon>
        <taxon>Pseudomonadales</taxon>
        <taxon>Pseudomonadaceae</taxon>
        <taxon>Pseudomonas</taxon>
    </lineage>
</organism>
<evidence type="ECO:0000255" key="1">
    <source>
        <dbReference type="HAMAP-Rule" id="MF_00387"/>
    </source>
</evidence>
<accession>Q48F71</accession>
<keyword id="KW-0012">Acyltransferase</keyword>
<keyword id="KW-0963">Cytoplasm</keyword>
<keyword id="KW-0441">Lipid A biosynthesis</keyword>
<keyword id="KW-0444">Lipid biosynthesis</keyword>
<keyword id="KW-0443">Lipid metabolism</keyword>
<keyword id="KW-0677">Repeat</keyword>
<keyword id="KW-0808">Transferase</keyword>
<dbReference type="EC" id="2.3.1.129" evidence="1"/>
<dbReference type="EMBL" id="CP000058">
    <property type="protein sequence ID" value="AAZ36509.1"/>
    <property type="molecule type" value="Genomic_DNA"/>
</dbReference>
<dbReference type="RefSeq" id="WP_011169292.1">
    <property type="nucleotide sequence ID" value="NC_005773.3"/>
</dbReference>
<dbReference type="SMR" id="Q48F71"/>
<dbReference type="KEGG" id="psp:PSPPH_3828"/>
<dbReference type="eggNOG" id="COG1043">
    <property type="taxonomic scope" value="Bacteria"/>
</dbReference>
<dbReference type="HOGENOM" id="CLU_061249_0_0_6"/>
<dbReference type="UniPathway" id="UPA00359">
    <property type="reaction ID" value="UER00477"/>
</dbReference>
<dbReference type="Proteomes" id="UP000000551">
    <property type="component" value="Chromosome"/>
</dbReference>
<dbReference type="GO" id="GO:0005737">
    <property type="term" value="C:cytoplasm"/>
    <property type="evidence" value="ECO:0007669"/>
    <property type="project" value="UniProtKB-SubCell"/>
</dbReference>
<dbReference type="GO" id="GO:0016020">
    <property type="term" value="C:membrane"/>
    <property type="evidence" value="ECO:0007669"/>
    <property type="project" value="GOC"/>
</dbReference>
<dbReference type="GO" id="GO:0008780">
    <property type="term" value="F:acyl-[acyl-carrier-protein]-UDP-N-acetylglucosamine O-acyltransferase activity"/>
    <property type="evidence" value="ECO:0007669"/>
    <property type="project" value="UniProtKB-UniRule"/>
</dbReference>
<dbReference type="GO" id="GO:0009245">
    <property type="term" value="P:lipid A biosynthetic process"/>
    <property type="evidence" value="ECO:0007669"/>
    <property type="project" value="UniProtKB-UniRule"/>
</dbReference>
<dbReference type="CDD" id="cd03351">
    <property type="entry name" value="LbH_UDP-GlcNAc_AT"/>
    <property type="match status" value="1"/>
</dbReference>
<dbReference type="FunFam" id="2.160.10.10:FF:000003">
    <property type="entry name" value="Acyl-[acyl-carrier-protein]--UDP-N-acetylglucosamine O-acyltransferase"/>
    <property type="match status" value="1"/>
</dbReference>
<dbReference type="Gene3D" id="2.160.10.10">
    <property type="entry name" value="Hexapeptide repeat proteins"/>
    <property type="match status" value="1"/>
</dbReference>
<dbReference type="Gene3D" id="1.20.1180.10">
    <property type="entry name" value="Udp N-acetylglucosamine O-acyltransferase, C-terminal domain"/>
    <property type="match status" value="1"/>
</dbReference>
<dbReference type="HAMAP" id="MF_00387">
    <property type="entry name" value="LpxA"/>
    <property type="match status" value="1"/>
</dbReference>
<dbReference type="InterPro" id="IPR029098">
    <property type="entry name" value="Acetyltransf_C"/>
</dbReference>
<dbReference type="InterPro" id="IPR037157">
    <property type="entry name" value="Acetyltransf_C_sf"/>
</dbReference>
<dbReference type="InterPro" id="IPR001451">
    <property type="entry name" value="Hexapep"/>
</dbReference>
<dbReference type="InterPro" id="IPR018357">
    <property type="entry name" value="Hexapep_transf_CS"/>
</dbReference>
<dbReference type="InterPro" id="IPR010137">
    <property type="entry name" value="Lipid_A_LpxA"/>
</dbReference>
<dbReference type="InterPro" id="IPR011004">
    <property type="entry name" value="Trimer_LpxA-like_sf"/>
</dbReference>
<dbReference type="NCBIfam" id="TIGR01852">
    <property type="entry name" value="lipid_A_lpxA"/>
    <property type="match status" value="1"/>
</dbReference>
<dbReference type="NCBIfam" id="NF003657">
    <property type="entry name" value="PRK05289.1"/>
    <property type="match status" value="1"/>
</dbReference>
<dbReference type="PANTHER" id="PTHR43480">
    <property type="entry name" value="ACYL-[ACYL-CARRIER-PROTEIN]--UDP-N-ACETYLGLUCOSAMINE O-ACYLTRANSFERASE"/>
    <property type="match status" value="1"/>
</dbReference>
<dbReference type="PANTHER" id="PTHR43480:SF1">
    <property type="entry name" value="ACYL-[ACYL-CARRIER-PROTEIN]--UDP-N-ACETYLGLUCOSAMINE O-ACYLTRANSFERASE, MITOCHONDRIAL-RELATED"/>
    <property type="match status" value="1"/>
</dbReference>
<dbReference type="Pfam" id="PF13720">
    <property type="entry name" value="Acetyltransf_11"/>
    <property type="match status" value="1"/>
</dbReference>
<dbReference type="Pfam" id="PF00132">
    <property type="entry name" value="Hexapep"/>
    <property type="match status" value="1"/>
</dbReference>
<dbReference type="PIRSF" id="PIRSF000456">
    <property type="entry name" value="UDP-GlcNAc_acltr"/>
    <property type="match status" value="1"/>
</dbReference>
<dbReference type="SUPFAM" id="SSF51161">
    <property type="entry name" value="Trimeric LpxA-like enzymes"/>
    <property type="match status" value="1"/>
</dbReference>
<dbReference type="PROSITE" id="PS00101">
    <property type="entry name" value="HEXAPEP_TRANSFERASES"/>
    <property type="match status" value="1"/>
</dbReference>
<sequence>MSLIDPRAIIDPTVILADNVEVGPWSIIGAGVEIGEGTVVGPHVVLKGPTRIGKHNRIYQFSSVGEDTPDLKYKGEETRLVIGDHNVIREGVTIHRGTVQDRAETTLGDHNLIMAYAHIGHDSVIGNHVILVNNTALAGHVHVDDWAILSGFTLVHQFCHIGAHSFSGMGTAIGKDVPAFVTVFGNPAEARSMNFEGMRRRGFSEEAIHALRRAYKTVYRQGLTIAQAAADLAEPAAQFPEVAVFLQSIQTSTRGIIR</sequence>
<reference key="1">
    <citation type="journal article" date="2005" name="J. Bacteriol.">
        <title>Whole-genome sequence analysis of Pseudomonas syringae pv. phaseolicola 1448A reveals divergence among pathovars in genes involved in virulence and transposition.</title>
        <authorList>
            <person name="Joardar V."/>
            <person name="Lindeberg M."/>
            <person name="Jackson R.W."/>
            <person name="Selengut J."/>
            <person name="Dodson R."/>
            <person name="Brinkac L.M."/>
            <person name="Daugherty S.C."/>
            <person name="DeBoy R.T."/>
            <person name="Durkin A.S."/>
            <person name="Gwinn Giglio M."/>
            <person name="Madupu R."/>
            <person name="Nelson W.C."/>
            <person name="Rosovitz M.J."/>
            <person name="Sullivan S.A."/>
            <person name="Crabtree J."/>
            <person name="Creasy T."/>
            <person name="Davidsen T.M."/>
            <person name="Haft D.H."/>
            <person name="Zafar N."/>
            <person name="Zhou L."/>
            <person name="Halpin R."/>
            <person name="Holley T."/>
            <person name="Khouri H.M."/>
            <person name="Feldblyum T.V."/>
            <person name="White O."/>
            <person name="Fraser C.M."/>
            <person name="Chatterjee A.K."/>
            <person name="Cartinhour S."/>
            <person name="Schneider D."/>
            <person name="Mansfield J.W."/>
            <person name="Collmer A."/>
            <person name="Buell R."/>
        </authorList>
    </citation>
    <scope>NUCLEOTIDE SEQUENCE [LARGE SCALE GENOMIC DNA]</scope>
    <source>
        <strain>1448A / Race 6</strain>
    </source>
</reference>
<comment type="function">
    <text evidence="1">Involved in the biosynthesis of lipid A, a phosphorylated glycolipid that anchors the lipopolysaccharide to the outer membrane of the cell.</text>
</comment>
<comment type="catalytic activity">
    <reaction evidence="1">
        <text>a (3R)-hydroxyacyl-[ACP] + UDP-N-acetyl-alpha-D-glucosamine = a UDP-3-O-[(3R)-3-hydroxyacyl]-N-acetyl-alpha-D-glucosamine + holo-[ACP]</text>
        <dbReference type="Rhea" id="RHEA:67812"/>
        <dbReference type="Rhea" id="RHEA-COMP:9685"/>
        <dbReference type="Rhea" id="RHEA-COMP:9945"/>
        <dbReference type="ChEBI" id="CHEBI:57705"/>
        <dbReference type="ChEBI" id="CHEBI:64479"/>
        <dbReference type="ChEBI" id="CHEBI:78827"/>
        <dbReference type="ChEBI" id="CHEBI:173225"/>
        <dbReference type="EC" id="2.3.1.129"/>
    </reaction>
</comment>
<comment type="pathway">
    <text evidence="1">Glycolipid biosynthesis; lipid IV(A) biosynthesis; lipid IV(A) from (3R)-3-hydroxytetradecanoyl-[acyl-carrier-protein] and UDP-N-acetyl-alpha-D-glucosamine: step 1/6.</text>
</comment>
<comment type="subunit">
    <text evidence="1">Homotrimer.</text>
</comment>
<comment type="subcellular location">
    <subcellularLocation>
        <location evidence="1">Cytoplasm</location>
    </subcellularLocation>
</comment>
<comment type="similarity">
    <text evidence="1">Belongs to the transferase hexapeptide repeat family. LpxA subfamily.</text>
</comment>
<protein>
    <recommendedName>
        <fullName evidence="1">Acyl-[acyl-carrier-protein]--UDP-N-acetylglucosamine O-acyltransferase</fullName>
        <shortName evidence="1">UDP-N-acetylglucosamine acyltransferase</shortName>
        <ecNumber evidence="1">2.3.1.129</ecNumber>
    </recommendedName>
</protein>
<feature type="chain" id="PRO_0000302590" description="Acyl-[acyl-carrier-protein]--UDP-N-acetylglucosamine O-acyltransferase">
    <location>
        <begin position="1"/>
        <end position="258"/>
    </location>
</feature>